<organism>
    <name type="scientific">Rattus norvegicus</name>
    <name type="common">Rat</name>
    <dbReference type="NCBI Taxonomy" id="10116"/>
    <lineage>
        <taxon>Eukaryota</taxon>
        <taxon>Metazoa</taxon>
        <taxon>Chordata</taxon>
        <taxon>Craniata</taxon>
        <taxon>Vertebrata</taxon>
        <taxon>Euteleostomi</taxon>
        <taxon>Mammalia</taxon>
        <taxon>Eutheria</taxon>
        <taxon>Euarchontoglires</taxon>
        <taxon>Glires</taxon>
        <taxon>Rodentia</taxon>
        <taxon>Myomorpha</taxon>
        <taxon>Muroidea</taxon>
        <taxon>Muridae</taxon>
        <taxon>Murinae</taxon>
        <taxon>Rattus</taxon>
    </lineage>
</organism>
<protein>
    <recommendedName>
        <fullName>TGF-beta receptor type-2</fullName>
        <shortName>TGFR-2</shortName>
        <ecNumber>2.7.11.30</ecNumber>
    </recommendedName>
    <alternativeName>
        <fullName>TGF-beta type II receptor</fullName>
    </alternativeName>
    <alternativeName>
        <fullName>Transforming growth factor-beta receptor type II</fullName>
        <shortName>TGF-beta receptor type II</shortName>
        <shortName>TbetaR-II</shortName>
    </alternativeName>
</protein>
<evidence type="ECO:0000250" key="1"/>
<evidence type="ECO:0000250" key="2">
    <source>
        <dbReference type="UniProtKB" id="P37173"/>
    </source>
</evidence>
<evidence type="ECO:0000250" key="3">
    <source>
        <dbReference type="UniProtKB" id="Q62312"/>
    </source>
</evidence>
<evidence type="ECO:0000255" key="4"/>
<evidence type="ECO:0000255" key="5">
    <source>
        <dbReference type="PROSITE-ProRule" id="PRU00159"/>
    </source>
</evidence>
<evidence type="ECO:0000255" key="6">
    <source>
        <dbReference type="PROSITE-ProRule" id="PRU10027"/>
    </source>
</evidence>
<evidence type="ECO:0000256" key="7">
    <source>
        <dbReference type="SAM" id="MobiDB-lite"/>
    </source>
</evidence>
<evidence type="ECO:0000305" key="8"/>
<evidence type="ECO:0007744" key="9">
    <source>
    </source>
</evidence>
<dbReference type="EC" id="2.7.11.30"/>
<dbReference type="EMBL" id="L09653">
    <property type="protein sequence ID" value="AAA42237.1"/>
    <property type="molecule type" value="mRNA"/>
</dbReference>
<dbReference type="EMBL" id="S67770">
    <property type="protein sequence ID" value="AAB29352.2"/>
    <property type="molecule type" value="mRNA"/>
</dbReference>
<dbReference type="PIR" id="JN0459">
    <property type="entry name" value="JN0459"/>
</dbReference>
<dbReference type="RefSeq" id="NP_112394.4">
    <property type="nucleotide sequence ID" value="NM_031132.4"/>
</dbReference>
<dbReference type="SMR" id="P38438"/>
<dbReference type="BioGRID" id="249668">
    <property type="interactions" value="3"/>
</dbReference>
<dbReference type="CORUM" id="P38438"/>
<dbReference type="FunCoup" id="P38438">
    <property type="interactions" value="1975"/>
</dbReference>
<dbReference type="IntAct" id="P38438">
    <property type="interactions" value="1"/>
</dbReference>
<dbReference type="STRING" id="10116.ENSRNOP00000035501"/>
<dbReference type="GlyCosmos" id="P38438">
    <property type="glycosylation" value="2 sites, No reported glycans"/>
</dbReference>
<dbReference type="GlyGen" id="P38438">
    <property type="glycosylation" value="2 sites"/>
</dbReference>
<dbReference type="iPTMnet" id="P38438"/>
<dbReference type="PhosphoSitePlus" id="P38438"/>
<dbReference type="SwissPalm" id="P38438"/>
<dbReference type="PaxDb" id="10116-ENSRNOP00000035501"/>
<dbReference type="Ensembl" id="ENSRNOT00000116107.1">
    <property type="protein sequence ID" value="ENSRNOP00000093892.1"/>
    <property type="gene ID" value="ENSRNOG00000013265.7"/>
</dbReference>
<dbReference type="GeneID" id="81810"/>
<dbReference type="KEGG" id="rno:81810"/>
<dbReference type="UCSC" id="RGD:69651">
    <property type="organism name" value="rat"/>
</dbReference>
<dbReference type="AGR" id="RGD:69651"/>
<dbReference type="CTD" id="7048"/>
<dbReference type="RGD" id="69651">
    <property type="gene designation" value="Tgfbr2"/>
</dbReference>
<dbReference type="eggNOG" id="KOG3653">
    <property type="taxonomic scope" value="Eukaryota"/>
</dbReference>
<dbReference type="GeneTree" id="ENSGT00940000157527"/>
<dbReference type="HOGENOM" id="CLU_000288_8_3_1"/>
<dbReference type="InParanoid" id="P38438"/>
<dbReference type="PhylomeDB" id="P38438"/>
<dbReference type="BRENDA" id="2.7.10.2">
    <property type="organism ID" value="5301"/>
</dbReference>
<dbReference type="Reactome" id="R-RNO-2173788">
    <property type="pathway name" value="Downregulation of TGF-beta receptor signaling"/>
</dbReference>
<dbReference type="Reactome" id="R-RNO-2173789">
    <property type="pathway name" value="TGF-beta receptor signaling activates SMADs"/>
</dbReference>
<dbReference type="Reactome" id="R-RNO-2173791">
    <property type="pathway name" value="TGF-beta receptor signaling in EMT (epithelial to mesenchymal transition)"/>
</dbReference>
<dbReference type="Reactome" id="R-RNO-9839389">
    <property type="pathway name" value="TGFBR3 regulates TGF-beta signaling"/>
</dbReference>
<dbReference type="PRO" id="PR:P38438"/>
<dbReference type="Proteomes" id="UP000002494">
    <property type="component" value="Chromosome 8"/>
</dbReference>
<dbReference type="Bgee" id="ENSRNOG00000013265">
    <property type="expression patterns" value="Expressed in lung and 18 other cell types or tissues"/>
</dbReference>
<dbReference type="ExpressionAtlas" id="P38438">
    <property type="expression patterns" value="baseline and differential"/>
</dbReference>
<dbReference type="GO" id="GO:0048179">
    <property type="term" value="C:activin receptor complex"/>
    <property type="evidence" value="ECO:0000318"/>
    <property type="project" value="GO_Central"/>
</dbReference>
<dbReference type="GO" id="GO:0005901">
    <property type="term" value="C:caveola"/>
    <property type="evidence" value="ECO:0000314"/>
    <property type="project" value="MGI"/>
</dbReference>
<dbReference type="GO" id="GO:0009986">
    <property type="term" value="C:cell surface"/>
    <property type="evidence" value="ECO:0000314"/>
    <property type="project" value="RGD"/>
</dbReference>
<dbReference type="GO" id="GO:0009897">
    <property type="term" value="C:external side of plasma membrane"/>
    <property type="evidence" value="ECO:0000266"/>
    <property type="project" value="RGD"/>
</dbReference>
<dbReference type="GO" id="GO:0016020">
    <property type="term" value="C:membrane"/>
    <property type="evidence" value="ECO:0000266"/>
    <property type="project" value="RGD"/>
</dbReference>
<dbReference type="GO" id="GO:0045121">
    <property type="term" value="C:membrane raft"/>
    <property type="evidence" value="ECO:0000314"/>
    <property type="project" value="MGI"/>
</dbReference>
<dbReference type="GO" id="GO:0005886">
    <property type="term" value="C:plasma membrane"/>
    <property type="evidence" value="ECO:0000266"/>
    <property type="project" value="RGD"/>
</dbReference>
<dbReference type="GO" id="GO:0043235">
    <property type="term" value="C:receptor complex"/>
    <property type="evidence" value="ECO:0000266"/>
    <property type="project" value="RGD"/>
</dbReference>
<dbReference type="GO" id="GO:0070021">
    <property type="term" value="C:transforming growth factor beta ligand-receptor complex"/>
    <property type="evidence" value="ECO:0000266"/>
    <property type="project" value="RGD"/>
</dbReference>
<dbReference type="GO" id="GO:0048185">
    <property type="term" value="F:activin binding"/>
    <property type="evidence" value="ECO:0000318"/>
    <property type="project" value="GO_Central"/>
</dbReference>
<dbReference type="GO" id="GO:0016361">
    <property type="term" value="F:activin receptor activity, type I"/>
    <property type="evidence" value="ECO:0000318"/>
    <property type="project" value="GO_Central"/>
</dbReference>
<dbReference type="GO" id="GO:0005524">
    <property type="term" value="F:ATP binding"/>
    <property type="evidence" value="ECO:0007669"/>
    <property type="project" value="UniProtKB-KW"/>
</dbReference>
<dbReference type="GO" id="GO:0005539">
    <property type="term" value="F:glycosaminoglycan binding"/>
    <property type="evidence" value="ECO:0000266"/>
    <property type="project" value="RGD"/>
</dbReference>
<dbReference type="GO" id="GO:0019209">
    <property type="term" value="F:kinase activator activity"/>
    <property type="evidence" value="ECO:0000266"/>
    <property type="project" value="RGD"/>
</dbReference>
<dbReference type="GO" id="GO:0046872">
    <property type="term" value="F:metal ion binding"/>
    <property type="evidence" value="ECO:0007669"/>
    <property type="project" value="UniProtKB-KW"/>
</dbReference>
<dbReference type="GO" id="GO:0031435">
    <property type="term" value="F:mitogen-activated protein kinase kinase kinase binding"/>
    <property type="evidence" value="ECO:0000353"/>
    <property type="project" value="RGD"/>
</dbReference>
<dbReference type="GO" id="GO:0060090">
    <property type="term" value="F:molecular adaptor activity"/>
    <property type="evidence" value="ECO:0000266"/>
    <property type="project" value="RGD"/>
</dbReference>
<dbReference type="GO" id="GO:0042803">
    <property type="term" value="F:protein homodimerization activity"/>
    <property type="evidence" value="ECO:0000304"/>
    <property type="project" value="RGD"/>
</dbReference>
<dbReference type="GO" id="GO:0044877">
    <property type="term" value="F:protein-containing complex binding"/>
    <property type="evidence" value="ECO:0000304"/>
    <property type="project" value="RGD"/>
</dbReference>
<dbReference type="GO" id="GO:0046332">
    <property type="term" value="F:SMAD binding"/>
    <property type="evidence" value="ECO:0000266"/>
    <property type="project" value="RGD"/>
</dbReference>
<dbReference type="GO" id="GO:0050431">
    <property type="term" value="F:transforming growth factor beta binding"/>
    <property type="evidence" value="ECO:0000266"/>
    <property type="project" value="RGD"/>
</dbReference>
<dbReference type="GO" id="GO:0005024">
    <property type="term" value="F:transforming growth factor beta receptor activity"/>
    <property type="evidence" value="ECO:0000266"/>
    <property type="project" value="RGD"/>
</dbReference>
<dbReference type="GO" id="GO:0005026">
    <property type="term" value="F:transforming growth factor beta receptor activity, type II"/>
    <property type="evidence" value="ECO:0000315"/>
    <property type="project" value="RGD"/>
</dbReference>
<dbReference type="GO" id="GO:0004675">
    <property type="term" value="F:transmembrane receptor protein serine/threonine kinase activity"/>
    <property type="evidence" value="ECO:0000266"/>
    <property type="project" value="RGD"/>
</dbReference>
<dbReference type="GO" id="GO:0034713">
    <property type="term" value="F:type I transforming growth factor beta receptor binding"/>
    <property type="evidence" value="ECO:0000266"/>
    <property type="project" value="RGD"/>
</dbReference>
<dbReference type="GO" id="GO:0032924">
    <property type="term" value="P:activin receptor signaling pathway"/>
    <property type="evidence" value="ECO:0000318"/>
    <property type="project" value="GO_Central"/>
</dbReference>
<dbReference type="GO" id="GO:0009887">
    <property type="term" value="P:animal organ morphogenesis"/>
    <property type="evidence" value="ECO:0000315"/>
    <property type="project" value="RGD"/>
</dbReference>
<dbReference type="GO" id="GO:0031100">
    <property type="term" value="P:animal organ regeneration"/>
    <property type="evidence" value="ECO:0000270"/>
    <property type="project" value="RGD"/>
</dbReference>
<dbReference type="GO" id="GO:0035909">
    <property type="term" value="P:aorta morphogenesis"/>
    <property type="evidence" value="ECO:0000266"/>
    <property type="project" value="RGD"/>
</dbReference>
<dbReference type="GO" id="GO:0003180">
    <property type="term" value="P:aortic valve morphogenesis"/>
    <property type="evidence" value="ECO:0000266"/>
    <property type="project" value="RGD"/>
</dbReference>
<dbReference type="GO" id="GO:0006915">
    <property type="term" value="P:apoptotic process"/>
    <property type="evidence" value="ECO:0000266"/>
    <property type="project" value="RGD"/>
</dbReference>
<dbReference type="GO" id="GO:0048844">
    <property type="term" value="P:artery morphogenesis"/>
    <property type="evidence" value="ECO:0000266"/>
    <property type="project" value="RGD"/>
</dbReference>
<dbReference type="GO" id="GO:0003181">
    <property type="term" value="P:atrioventricular valve morphogenesis"/>
    <property type="evidence" value="ECO:0000266"/>
    <property type="project" value="RGD"/>
</dbReference>
<dbReference type="GO" id="GO:0007420">
    <property type="term" value="P:brain development"/>
    <property type="evidence" value="ECO:0000266"/>
    <property type="project" value="RGD"/>
</dbReference>
<dbReference type="GO" id="GO:0001569">
    <property type="term" value="P:branching involved in blood vessel morphogenesis"/>
    <property type="evidence" value="ECO:0000266"/>
    <property type="project" value="RGD"/>
</dbReference>
<dbReference type="GO" id="GO:0060433">
    <property type="term" value="P:bronchus development"/>
    <property type="evidence" value="ECO:0000266"/>
    <property type="project" value="RGD"/>
</dbReference>
<dbReference type="GO" id="GO:0060434">
    <property type="term" value="P:bronchus morphogenesis"/>
    <property type="evidence" value="ECO:0000266"/>
    <property type="project" value="RGD"/>
</dbReference>
<dbReference type="GO" id="GO:0003214">
    <property type="term" value="P:cardiac left ventricle morphogenesis"/>
    <property type="evidence" value="ECO:0000266"/>
    <property type="project" value="RGD"/>
</dbReference>
<dbReference type="GO" id="GO:0051216">
    <property type="term" value="P:cartilage development"/>
    <property type="evidence" value="ECO:0000266"/>
    <property type="project" value="RGD"/>
</dbReference>
<dbReference type="GO" id="GO:1905641">
    <property type="term" value="P:cellular response to acetaldehyde"/>
    <property type="evidence" value="ECO:0000270"/>
    <property type="project" value="RGD"/>
</dbReference>
<dbReference type="GO" id="GO:0071363">
    <property type="term" value="P:cellular response to growth factor stimulus"/>
    <property type="evidence" value="ECO:0000318"/>
    <property type="project" value="GO_Central"/>
</dbReference>
<dbReference type="GO" id="GO:0048565">
    <property type="term" value="P:digestive tract development"/>
    <property type="evidence" value="ECO:0000270"/>
    <property type="project" value="RGD"/>
</dbReference>
<dbReference type="GO" id="GO:0007566">
    <property type="term" value="P:embryo implantation"/>
    <property type="evidence" value="ECO:0000270"/>
    <property type="project" value="RGD"/>
</dbReference>
<dbReference type="GO" id="GO:0048701">
    <property type="term" value="P:embryonic cranial skeleton morphogenesis"/>
    <property type="evidence" value="ECO:0000266"/>
    <property type="project" value="RGD"/>
</dbReference>
<dbReference type="GO" id="GO:0035162">
    <property type="term" value="P:embryonic hemopoiesis"/>
    <property type="evidence" value="ECO:0000266"/>
    <property type="project" value="RGD"/>
</dbReference>
<dbReference type="GO" id="GO:0003274">
    <property type="term" value="P:endocardial cushion fusion"/>
    <property type="evidence" value="ECO:0000266"/>
    <property type="project" value="RGD"/>
</dbReference>
<dbReference type="GO" id="GO:0001837">
    <property type="term" value="P:epithelial to mesenchymal transition"/>
    <property type="evidence" value="ECO:0000266"/>
    <property type="project" value="RGD"/>
</dbReference>
<dbReference type="GO" id="GO:0007369">
    <property type="term" value="P:gastrulation"/>
    <property type="evidence" value="ECO:0000266"/>
    <property type="project" value="RGD"/>
</dbReference>
<dbReference type="GO" id="GO:0003430">
    <property type="term" value="P:growth plate cartilage chondrocyte growth"/>
    <property type="evidence" value="ECO:0000266"/>
    <property type="project" value="RGD"/>
</dbReference>
<dbReference type="GO" id="GO:0003417">
    <property type="term" value="P:growth plate cartilage development"/>
    <property type="evidence" value="ECO:0000266"/>
    <property type="project" value="RGD"/>
</dbReference>
<dbReference type="GO" id="GO:0007507">
    <property type="term" value="P:heart development"/>
    <property type="evidence" value="ECO:0000266"/>
    <property type="project" value="RGD"/>
</dbReference>
<dbReference type="GO" id="GO:0001947">
    <property type="term" value="P:heart looping"/>
    <property type="evidence" value="ECO:0000266"/>
    <property type="project" value="RGD"/>
</dbReference>
<dbReference type="GO" id="GO:0001701">
    <property type="term" value="P:in utero embryonic development"/>
    <property type="evidence" value="ECO:0000266"/>
    <property type="project" value="RGD"/>
</dbReference>
<dbReference type="GO" id="GO:1905317">
    <property type="term" value="P:inferior endocardial cushion morphogenesis"/>
    <property type="evidence" value="ECO:0000266"/>
    <property type="project" value="RGD"/>
</dbReference>
<dbReference type="GO" id="GO:0061520">
    <property type="term" value="P:Langerhans cell differentiation"/>
    <property type="evidence" value="ECO:0000266"/>
    <property type="project" value="RGD"/>
</dbReference>
<dbReference type="GO" id="GO:0002088">
    <property type="term" value="P:lens development in camera-type eye"/>
    <property type="evidence" value="ECO:0000266"/>
    <property type="project" value="RGD"/>
</dbReference>
<dbReference type="GO" id="GO:1990086">
    <property type="term" value="P:lens fiber cell apoptotic process"/>
    <property type="evidence" value="ECO:0000266"/>
    <property type="project" value="RGD"/>
</dbReference>
<dbReference type="GO" id="GO:0030324">
    <property type="term" value="P:lung development"/>
    <property type="evidence" value="ECO:0000270"/>
    <property type="project" value="RGD"/>
</dbReference>
<dbReference type="GO" id="GO:0060463">
    <property type="term" value="P:lung lobe morphogenesis"/>
    <property type="evidence" value="ECO:0000266"/>
    <property type="project" value="RGD"/>
</dbReference>
<dbReference type="GO" id="GO:0060425">
    <property type="term" value="P:lung morphogenesis"/>
    <property type="evidence" value="ECO:0000266"/>
    <property type="project" value="RGD"/>
</dbReference>
<dbReference type="GO" id="GO:0060443">
    <property type="term" value="P:mammary gland morphogenesis"/>
    <property type="evidence" value="ECO:0000266"/>
    <property type="project" value="RGD"/>
</dbReference>
<dbReference type="GO" id="GO:0003149">
    <property type="term" value="P:membranous septum morphogenesis"/>
    <property type="evidence" value="ECO:0000266"/>
    <property type="project" value="RGD"/>
</dbReference>
<dbReference type="GO" id="GO:1990428">
    <property type="term" value="P:miRNA transport"/>
    <property type="evidence" value="ECO:0000266"/>
    <property type="project" value="RGD"/>
</dbReference>
<dbReference type="GO" id="GO:0060044">
    <property type="term" value="P:negative regulation of cardiac muscle cell proliferation"/>
    <property type="evidence" value="ECO:0000315"/>
    <property type="project" value="RGD"/>
</dbReference>
<dbReference type="GO" id="GO:0008285">
    <property type="term" value="P:negative regulation of cell population proliferation"/>
    <property type="evidence" value="ECO:0000315"/>
    <property type="project" value="RGD"/>
</dbReference>
<dbReference type="GO" id="GO:0007399">
    <property type="term" value="P:nervous system development"/>
    <property type="evidence" value="ECO:0000318"/>
    <property type="project" value="GO_Central"/>
</dbReference>
<dbReference type="GO" id="GO:0007219">
    <property type="term" value="P:Notch signaling pathway"/>
    <property type="evidence" value="ECO:0000266"/>
    <property type="project" value="RGD"/>
</dbReference>
<dbReference type="GO" id="GO:0003151">
    <property type="term" value="P:outflow tract morphogenesis"/>
    <property type="evidence" value="ECO:0000266"/>
    <property type="project" value="RGD"/>
</dbReference>
<dbReference type="GO" id="GO:0003148">
    <property type="term" value="P:outflow tract septum morphogenesis"/>
    <property type="evidence" value="ECO:0000266"/>
    <property type="project" value="RGD"/>
</dbReference>
<dbReference type="GO" id="GO:0045766">
    <property type="term" value="P:positive regulation of angiogenesis"/>
    <property type="evidence" value="ECO:0000266"/>
    <property type="project" value="RGD"/>
</dbReference>
<dbReference type="GO" id="GO:0002663">
    <property type="term" value="P:positive regulation of B cell tolerance induction"/>
    <property type="evidence" value="ECO:0000266"/>
    <property type="project" value="RGD"/>
</dbReference>
<dbReference type="GO" id="GO:2000563">
    <property type="term" value="P:positive regulation of CD4-positive, alpha-beta T cell proliferation"/>
    <property type="evidence" value="ECO:0000266"/>
    <property type="project" value="RGD"/>
</dbReference>
<dbReference type="GO" id="GO:0010634">
    <property type="term" value="P:positive regulation of epithelial cell migration"/>
    <property type="evidence" value="ECO:0000266"/>
    <property type="project" value="RGD"/>
</dbReference>
<dbReference type="GO" id="GO:0010718">
    <property type="term" value="P:positive regulation of epithelial to mesenchymal transition"/>
    <property type="evidence" value="ECO:0000266"/>
    <property type="project" value="RGD"/>
</dbReference>
<dbReference type="GO" id="GO:1905007">
    <property type="term" value="P:positive regulation of epithelial to mesenchymal transition involved in endocardial cushion formation"/>
    <property type="evidence" value="ECO:0000266"/>
    <property type="project" value="RGD"/>
</dbReference>
<dbReference type="GO" id="GO:0002053">
    <property type="term" value="P:positive regulation of mesenchymal cell proliferation"/>
    <property type="evidence" value="ECO:0000266"/>
    <property type="project" value="RGD"/>
</dbReference>
<dbReference type="GO" id="GO:0051138">
    <property type="term" value="P:positive regulation of NK T cell differentiation"/>
    <property type="evidence" value="ECO:0000266"/>
    <property type="project" value="RGD"/>
</dbReference>
<dbReference type="GO" id="GO:2000379">
    <property type="term" value="P:positive regulation of reactive oxygen species metabolic process"/>
    <property type="evidence" value="ECO:0000266"/>
    <property type="project" value="RGD"/>
</dbReference>
<dbReference type="GO" id="GO:0043415">
    <property type="term" value="P:positive regulation of skeletal muscle tissue regeneration"/>
    <property type="evidence" value="ECO:0000270"/>
    <property type="project" value="RGD"/>
</dbReference>
<dbReference type="GO" id="GO:0060391">
    <property type="term" value="P:positive regulation of SMAD protein signal transduction"/>
    <property type="evidence" value="ECO:0000266"/>
    <property type="project" value="RGD"/>
</dbReference>
<dbReference type="GO" id="GO:0048661">
    <property type="term" value="P:positive regulation of smooth muscle cell proliferation"/>
    <property type="evidence" value="ECO:0000315"/>
    <property type="project" value="RGD"/>
</dbReference>
<dbReference type="GO" id="GO:0002666">
    <property type="term" value="P:positive regulation of T cell tolerance induction"/>
    <property type="evidence" value="ECO:0000266"/>
    <property type="project" value="RGD"/>
</dbReference>
<dbReference type="GO" id="GO:0002651">
    <property type="term" value="P:positive regulation of tolerance induction to self antigen"/>
    <property type="evidence" value="ECO:0000266"/>
    <property type="project" value="RGD"/>
</dbReference>
<dbReference type="GO" id="GO:0006898">
    <property type="term" value="P:receptor-mediated endocytosis"/>
    <property type="evidence" value="ECO:0000314"/>
    <property type="project" value="RGD"/>
</dbReference>
<dbReference type="GO" id="GO:0042127">
    <property type="term" value="P:regulation of cell population proliferation"/>
    <property type="evidence" value="ECO:0000266"/>
    <property type="project" value="RGD"/>
</dbReference>
<dbReference type="GO" id="GO:0010468">
    <property type="term" value="P:regulation of gene expression"/>
    <property type="evidence" value="ECO:0000266"/>
    <property type="project" value="RGD"/>
</dbReference>
<dbReference type="GO" id="GO:2000736">
    <property type="term" value="P:regulation of stem cell differentiation"/>
    <property type="evidence" value="ECO:0000266"/>
    <property type="project" value="RGD"/>
</dbReference>
<dbReference type="GO" id="GO:0072091">
    <property type="term" value="P:regulation of stem cell proliferation"/>
    <property type="evidence" value="ECO:0000266"/>
    <property type="project" value="RGD"/>
</dbReference>
<dbReference type="GO" id="GO:0070723">
    <property type="term" value="P:response to cholesterol"/>
    <property type="evidence" value="ECO:0000266"/>
    <property type="project" value="RGD"/>
</dbReference>
<dbReference type="GO" id="GO:0043627">
    <property type="term" value="P:response to estrogen"/>
    <property type="evidence" value="ECO:0000270"/>
    <property type="project" value="RGD"/>
</dbReference>
<dbReference type="GO" id="GO:0009749">
    <property type="term" value="P:response to glucose"/>
    <property type="evidence" value="ECO:0000270"/>
    <property type="project" value="RGD"/>
</dbReference>
<dbReference type="GO" id="GO:0001666">
    <property type="term" value="P:response to hypoxia"/>
    <property type="evidence" value="ECO:0000270"/>
    <property type="project" value="RGD"/>
</dbReference>
<dbReference type="GO" id="GO:0009612">
    <property type="term" value="P:response to mechanical stimulus"/>
    <property type="evidence" value="ECO:0000270"/>
    <property type="project" value="RGD"/>
</dbReference>
<dbReference type="GO" id="GO:0007584">
    <property type="term" value="P:response to nutrient"/>
    <property type="evidence" value="ECO:0000270"/>
    <property type="project" value="RGD"/>
</dbReference>
<dbReference type="GO" id="GO:0048545">
    <property type="term" value="P:response to steroid hormone"/>
    <property type="evidence" value="ECO:0000270"/>
    <property type="project" value="RGD"/>
</dbReference>
<dbReference type="GO" id="GO:0009410">
    <property type="term" value="P:response to xenobiotic stimulus"/>
    <property type="evidence" value="ECO:0000266"/>
    <property type="project" value="RGD"/>
</dbReference>
<dbReference type="GO" id="GO:0060021">
    <property type="term" value="P:roof of mouth development"/>
    <property type="evidence" value="ECO:0000266"/>
    <property type="project" value="RGD"/>
</dbReference>
<dbReference type="GO" id="GO:0062009">
    <property type="term" value="P:secondary palate development"/>
    <property type="evidence" value="ECO:0000266"/>
    <property type="project" value="RGD"/>
</dbReference>
<dbReference type="GO" id="GO:0060395">
    <property type="term" value="P:SMAD protein signal transduction"/>
    <property type="evidence" value="ECO:0000266"/>
    <property type="project" value="RGD"/>
</dbReference>
<dbReference type="GO" id="GO:0007224">
    <property type="term" value="P:smoothened signaling pathway"/>
    <property type="evidence" value="ECO:0000266"/>
    <property type="project" value="RGD"/>
</dbReference>
<dbReference type="GO" id="GO:0060440">
    <property type="term" value="P:trachea formation"/>
    <property type="evidence" value="ECO:0000266"/>
    <property type="project" value="RGD"/>
</dbReference>
<dbReference type="GO" id="GO:0060439">
    <property type="term" value="P:trachea morphogenesis"/>
    <property type="evidence" value="ECO:0000266"/>
    <property type="project" value="RGD"/>
</dbReference>
<dbReference type="GO" id="GO:0007179">
    <property type="term" value="P:transforming growth factor beta receptor signaling pathway"/>
    <property type="evidence" value="ECO:0000315"/>
    <property type="project" value="RGD"/>
</dbReference>
<dbReference type="GO" id="GO:0003186">
    <property type="term" value="P:tricuspid valve morphogenesis"/>
    <property type="evidence" value="ECO:0000266"/>
    <property type="project" value="RGD"/>
</dbReference>
<dbReference type="GO" id="GO:0001570">
    <property type="term" value="P:vasculogenesis"/>
    <property type="evidence" value="ECO:0000270"/>
    <property type="project" value="RGD"/>
</dbReference>
<dbReference type="GO" id="GO:0060412">
    <property type="term" value="P:ventricular septum morphogenesis"/>
    <property type="evidence" value="ECO:0000266"/>
    <property type="project" value="RGD"/>
</dbReference>
<dbReference type="CDD" id="cd14055">
    <property type="entry name" value="STKc_TGFbR2_like"/>
    <property type="match status" value="1"/>
</dbReference>
<dbReference type="CDD" id="cd23538">
    <property type="entry name" value="TFP_LU_ECD_TGFR2"/>
    <property type="match status" value="1"/>
</dbReference>
<dbReference type="FunFam" id="1.10.510.10:FF:000260">
    <property type="entry name" value="TGF-beta receptor type-2"/>
    <property type="match status" value="1"/>
</dbReference>
<dbReference type="FunFam" id="2.10.60.10:FF:000009">
    <property type="entry name" value="TGF-beta receptor type-2"/>
    <property type="match status" value="1"/>
</dbReference>
<dbReference type="FunFam" id="3.30.200.20:FF:000213">
    <property type="entry name" value="TGF-beta receptor type-2"/>
    <property type="match status" value="1"/>
</dbReference>
<dbReference type="Gene3D" id="2.10.60.10">
    <property type="entry name" value="CD59"/>
    <property type="match status" value="1"/>
</dbReference>
<dbReference type="Gene3D" id="3.30.200.20">
    <property type="entry name" value="Phosphorylase Kinase, domain 1"/>
    <property type="match status" value="1"/>
</dbReference>
<dbReference type="Gene3D" id="1.10.510.10">
    <property type="entry name" value="Transferase(Phosphotransferase) domain 1"/>
    <property type="match status" value="1"/>
</dbReference>
<dbReference type="InterPro" id="IPR011009">
    <property type="entry name" value="Kinase-like_dom_sf"/>
</dbReference>
<dbReference type="InterPro" id="IPR000719">
    <property type="entry name" value="Prot_kinase_dom"/>
</dbReference>
<dbReference type="InterPro" id="IPR017441">
    <property type="entry name" value="Protein_kinase_ATP_BS"/>
</dbReference>
<dbReference type="InterPro" id="IPR001245">
    <property type="entry name" value="Ser-Thr/Tyr_kinase_cat_dom"/>
</dbReference>
<dbReference type="InterPro" id="IPR008271">
    <property type="entry name" value="Ser/Thr_kinase_AS"/>
</dbReference>
<dbReference type="InterPro" id="IPR045860">
    <property type="entry name" value="Snake_toxin-like_sf"/>
</dbReference>
<dbReference type="InterPro" id="IPR000333">
    <property type="entry name" value="TGFB_receptor"/>
</dbReference>
<dbReference type="InterPro" id="IPR017194">
    <property type="entry name" value="Transform_growth_fac-b_typ-2"/>
</dbReference>
<dbReference type="InterPro" id="IPR015013">
    <property type="entry name" value="Transforming_GF_b_rcpt_2_ecto"/>
</dbReference>
<dbReference type="PANTHER" id="PTHR23255:SF55">
    <property type="entry name" value="TGF-BETA RECEPTOR TYPE-2"/>
    <property type="match status" value="1"/>
</dbReference>
<dbReference type="PANTHER" id="PTHR23255">
    <property type="entry name" value="TRANSFORMING GROWTH FACTOR-BETA RECEPTOR TYPE I AND II"/>
    <property type="match status" value="1"/>
</dbReference>
<dbReference type="Pfam" id="PF08917">
    <property type="entry name" value="ecTbetaR2"/>
    <property type="match status" value="1"/>
</dbReference>
<dbReference type="Pfam" id="PF07714">
    <property type="entry name" value="PK_Tyr_Ser-Thr"/>
    <property type="match status" value="1"/>
</dbReference>
<dbReference type="PIRSF" id="PIRSF037393">
    <property type="entry name" value="TGFRII"/>
    <property type="match status" value="1"/>
</dbReference>
<dbReference type="PRINTS" id="PR00653">
    <property type="entry name" value="ACTIVIN2R"/>
</dbReference>
<dbReference type="SMART" id="SM00220">
    <property type="entry name" value="S_TKc"/>
    <property type="match status" value="1"/>
</dbReference>
<dbReference type="SUPFAM" id="SSF56112">
    <property type="entry name" value="Protein kinase-like (PK-like)"/>
    <property type="match status" value="1"/>
</dbReference>
<dbReference type="SUPFAM" id="SSF57302">
    <property type="entry name" value="Snake toxin-like"/>
    <property type="match status" value="1"/>
</dbReference>
<dbReference type="PROSITE" id="PS00107">
    <property type="entry name" value="PROTEIN_KINASE_ATP"/>
    <property type="match status" value="1"/>
</dbReference>
<dbReference type="PROSITE" id="PS50011">
    <property type="entry name" value="PROTEIN_KINASE_DOM"/>
    <property type="match status" value="1"/>
</dbReference>
<dbReference type="PROSITE" id="PS00108">
    <property type="entry name" value="PROTEIN_KINASE_ST"/>
    <property type="match status" value="1"/>
</dbReference>
<accession>P38438</accession>
<comment type="function">
    <text evidence="2">Transmembrane serine/threonine kinase forming with the TGF-beta type I serine/threonine kinase receptor, TGFBR1, the non-promiscuous receptor for the TGF-beta cytokines TGFB1, TGFB2 and TGFB3. Transduces the TGFB1, TGFB2 and TGFB3 signal from the cell surface to the cytoplasm and is thus regulating a plethora of physiological and pathological processes including cell cycle arrest in epithelial and hematopoietic cells, control of mesenchymal cell proliferation and differentiation, wound healing, extracellular matrix production, immunosuppression and carcinogenesis. The formation of the receptor complex composed of 2 TGFBR1 and 2 TGFBR2 molecules symmetrically bound to the cytokine dimer results in the phosphorylation and the activation of TGFRB1 by the constitutively active TGFBR2. Activated TGFBR1 phosphorylates SMAD2 which dissociates from the receptor and interacts with SMAD4. The SMAD2-SMAD4 complex is subsequently translocated to the nucleus where it modulates the transcription of the TGF-beta-regulated genes. This constitutes the canonical SMAD-dependent TGF-beta signaling cascade. Also involved in non-canonical, SMAD-independent TGF-beta signaling pathways (By similarity).</text>
</comment>
<comment type="catalytic activity">
    <reaction>
        <text>L-threonyl-[receptor-protein] + ATP = O-phospho-L-threonyl-[receptor-protein] + ADP + H(+)</text>
        <dbReference type="Rhea" id="RHEA:44880"/>
        <dbReference type="Rhea" id="RHEA-COMP:11024"/>
        <dbReference type="Rhea" id="RHEA-COMP:11025"/>
        <dbReference type="ChEBI" id="CHEBI:15378"/>
        <dbReference type="ChEBI" id="CHEBI:30013"/>
        <dbReference type="ChEBI" id="CHEBI:30616"/>
        <dbReference type="ChEBI" id="CHEBI:61977"/>
        <dbReference type="ChEBI" id="CHEBI:456216"/>
        <dbReference type="EC" id="2.7.11.30"/>
    </reaction>
</comment>
<comment type="catalytic activity">
    <reaction>
        <text>L-seryl-[receptor-protein] + ATP = O-phospho-L-seryl-[receptor-protein] + ADP + H(+)</text>
        <dbReference type="Rhea" id="RHEA:18673"/>
        <dbReference type="Rhea" id="RHEA-COMP:11022"/>
        <dbReference type="Rhea" id="RHEA-COMP:11023"/>
        <dbReference type="ChEBI" id="CHEBI:15378"/>
        <dbReference type="ChEBI" id="CHEBI:29999"/>
        <dbReference type="ChEBI" id="CHEBI:30616"/>
        <dbReference type="ChEBI" id="CHEBI:83421"/>
        <dbReference type="ChEBI" id="CHEBI:456216"/>
        <dbReference type="EC" id="2.7.11.30"/>
    </reaction>
</comment>
<comment type="cofactor">
    <cofactor evidence="1">
        <name>Mg(2+)</name>
        <dbReference type="ChEBI" id="CHEBI:18420"/>
    </cofactor>
    <cofactor evidence="1">
        <name>Mn(2+)</name>
        <dbReference type="ChEBI" id="CHEBI:29035"/>
    </cofactor>
</comment>
<comment type="subunit">
    <text evidence="2">Homodimer. Heterohexamer; TGFB1, TGFB2 and TGFB3 homodimeric ligands assemble a functional receptor composed of two TGFBR1 and TGFBR2 heterodimers to form a ligand-receptor heterohexamer. The respective affinity of TGFRB1 and TGFRB2 for the ligands may modulate the kinetics of assembly of the receptor and may explain the different biological activities of TGFB1, TGFB2 and TGFB3. Component of a complex composed of TSC22D1 (via N-terminus), TGFBR1 and TGFBR2; the interaction between TSC22D1 and TGFBR1 is inhibited by SMAD7 and promoted by TGFB1 (By similarity). Interacts with DAXX. Interacts with DYNLT4. Interacts with ZFYVE9; ZFYVE9 recruits SMAD2 and SMAD3 to the TGF-beta receptor (By similarity). Interacts with and is activated by SCUBE3; this interaction does not affect TGFB1-binding to TGFBR2 (By similarity). Interacts with VPS39; this interaction is independent of the receptor kinase activity and of the presence of TGF-beta (By similarity). Interacts with CLU (By similarity).</text>
</comment>
<comment type="subcellular location">
    <subcellularLocation>
        <location evidence="2">Cell membrane</location>
        <topology evidence="2">Single-pass type I membrane protein</topology>
    </subcellularLocation>
    <subcellularLocation>
        <location evidence="2">Membrane raft</location>
    </subcellularLocation>
</comment>
<comment type="PTM">
    <text>Phosphorylated on a Ser/Thr residue in the cytoplasmic domain.</text>
</comment>
<comment type="similarity">
    <text evidence="8">Belongs to the protein kinase superfamily. TKL Ser/Thr protein kinase family. TGFB receptor subfamily.</text>
</comment>
<gene>
    <name type="primary">Tgfbr2</name>
</gene>
<proteinExistence type="evidence at protein level"/>
<name>TGFR2_RAT</name>
<reference key="1">
    <citation type="journal article" date="1993" name="Biochem. Biophys. Res. Commun.">
        <title>Molecular characterization of rat transforming growth factor-beta type II receptor.</title>
        <authorList>
            <person name="Tsuchida K."/>
            <person name="Lewis K.A."/>
            <person name="Mathews L.S."/>
            <person name="Vale W.W."/>
        </authorList>
    </citation>
    <scope>NUCLEOTIDE SEQUENCE [MRNA]</scope>
    <source>
        <strain>Sprague-Dawley</strain>
        <tissue>Pituitary</tissue>
    </source>
</reference>
<reference key="2">
    <citation type="journal article" date="1993" name="Kidney Int.">
        <title>Rat mesangial cell hypertrophy in response to transforming growth factor-beta 1.</title>
        <authorList>
            <person name="Choi M.E."/>
            <person name="Kim E.G."/>
            <person name="Huang Q."/>
            <person name="Ballermann B.J."/>
        </authorList>
    </citation>
    <scope>NUCLEOTIDE SEQUENCE [MRNA]</scope>
</reference>
<reference key="3">
    <citation type="journal article" date="2012" name="Nat. Commun.">
        <title>Quantitative maps of protein phosphorylation sites across 14 different rat organs and tissues.</title>
        <authorList>
            <person name="Lundby A."/>
            <person name="Secher A."/>
            <person name="Lage K."/>
            <person name="Nordsborg N.B."/>
            <person name="Dmytriyev A."/>
            <person name="Lundby C."/>
            <person name="Olsen J.V."/>
        </authorList>
    </citation>
    <scope>PHOSPHORYLATION [LARGE SCALE ANALYSIS] AT SER-548</scope>
    <scope>IDENTIFICATION BY MASS SPECTROMETRY [LARGE SCALE ANALYSIS]</scope>
</reference>
<sequence length="567" mass="64241">MGRGLLRGLWPLHIVLWTRIASTIPPHVPKSVNSDLMAGDNSGAVKLPQLCKFCDVTLSTCDNQKSCMSNCSVTSICEKPQEVCVAVWRKNDKNITLETVCHDPKFTYHGFTLEDATSPTCVMKEKKRAGETFFMCSCNTEECNDYIIFNEEYTTSSPDLLLVIIQVTGVSLLPPLGIAIAVIAIFYCYRVHRQQKLSPSWESSKPRKLMDFSDNCAIILEDDRSDISSTCANNINHNTELLPIELDTLVGKGRFAEVYKAKLKQNTSEQFETVAVKIFPYEEYSSWKTEKDIFSDINLKHENILQFLTAEERKTEMGKQYWLITAFHAKGNLQEYLTRHVISWEDLRKLGSSLARGIAHLHSDHTPCGRPKMPIVHRDLKSSNILVKNDLTCCLCDFGLSLRLDPTLSVDDLANSGQVGTARYMAPEVLESRMNLENMESFKQTDVYSMALVLWEMTSRCNAVGEVKDYEPPFGSKVREHPCVESMKDNVLRDRGRPEIPSFWLNHQGIQIVCETLTECWDHDPEARLTAQCVAERFSELEHPDRLSGRSCSQEKIPEDGSLNTTK</sequence>
<feature type="signal peptide" evidence="4">
    <location>
        <begin position="1"/>
        <end position="23"/>
    </location>
</feature>
<feature type="chain" id="PRO_0000024429" description="TGF-beta receptor type-2">
    <location>
        <begin position="24"/>
        <end position="567"/>
    </location>
</feature>
<feature type="topological domain" description="Extracellular" evidence="4">
    <location>
        <begin position="24"/>
        <end position="166"/>
    </location>
</feature>
<feature type="transmembrane region" description="Helical" evidence="4">
    <location>
        <begin position="167"/>
        <end position="187"/>
    </location>
</feature>
<feature type="topological domain" description="Cytoplasmic" evidence="4">
    <location>
        <begin position="188"/>
        <end position="567"/>
    </location>
</feature>
<feature type="domain" description="Protein kinase" evidence="5">
    <location>
        <begin position="244"/>
        <end position="546"/>
    </location>
</feature>
<feature type="region of interest" description="Disordered" evidence="7">
    <location>
        <begin position="546"/>
        <end position="567"/>
    </location>
</feature>
<feature type="active site" description="Proton acceptor" evidence="5 6">
    <location>
        <position position="379"/>
    </location>
</feature>
<feature type="binding site" evidence="5">
    <location>
        <begin position="250"/>
        <end position="258"/>
    </location>
    <ligand>
        <name>ATP</name>
        <dbReference type="ChEBI" id="CHEBI:30616"/>
    </ligand>
</feature>
<feature type="binding site" evidence="5">
    <location>
        <position position="277"/>
    </location>
    <ligand>
        <name>ATP</name>
        <dbReference type="ChEBI" id="CHEBI:30616"/>
    </ligand>
</feature>
<feature type="modified residue" description="Phosphoserine" evidence="3">
    <location>
        <position position="409"/>
    </location>
</feature>
<feature type="modified residue" description="Phosphoserine" evidence="9">
    <location>
        <position position="548"/>
    </location>
</feature>
<feature type="modified residue" description="Phosphoserine" evidence="3">
    <location>
        <position position="553"/>
    </location>
</feature>
<feature type="glycosylation site" description="N-linked (GlcNAc...) asparagine" evidence="4">
    <location>
        <position position="70"/>
    </location>
</feature>
<feature type="glycosylation site" description="N-linked (GlcNAc...) asparagine" evidence="4">
    <location>
        <position position="94"/>
    </location>
</feature>
<feature type="disulfide bond" evidence="2">
    <location>
        <begin position="51"/>
        <end position="84"/>
    </location>
</feature>
<feature type="disulfide bond" evidence="2">
    <location>
        <begin position="54"/>
        <end position="71"/>
    </location>
</feature>
<feature type="disulfide bond" evidence="2">
    <location>
        <begin position="61"/>
        <end position="67"/>
    </location>
</feature>
<feature type="disulfide bond" evidence="2">
    <location>
        <begin position="77"/>
        <end position="101"/>
    </location>
</feature>
<feature type="disulfide bond" evidence="2">
    <location>
        <begin position="121"/>
        <end position="136"/>
    </location>
</feature>
<feature type="disulfide bond" evidence="2">
    <location>
        <begin position="138"/>
        <end position="143"/>
    </location>
</feature>
<feature type="sequence conflict" description="In Ref. 2; AAB29352." evidence="8" ref="2">
    <original>KN</original>
    <variation>RS</variation>
    <location>
        <begin position="388"/>
        <end position="389"/>
    </location>
</feature>
<feature type="sequence conflict" description="In Ref. 2; AAB29352." evidence="8" ref="2">
    <original>R</original>
    <variation>G</variation>
    <location>
        <position position="403"/>
    </location>
</feature>
<feature type="sequence conflict" description="In Ref. 2; AAB29352." evidence="8" ref="2">
    <original>D</original>
    <variation>S</variation>
    <location>
        <position position="405"/>
    </location>
</feature>
<feature type="sequence conflict" description="In Ref. 2; AAB29352." evidence="8" ref="2">
    <original>K</original>
    <variation>R</variation>
    <location>
        <position position="477"/>
    </location>
</feature>
<keyword id="KW-0053">Apoptosis</keyword>
<keyword id="KW-0067">ATP-binding</keyword>
<keyword id="KW-1003">Cell membrane</keyword>
<keyword id="KW-0221">Differentiation</keyword>
<keyword id="KW-1015">Disulfide bond</keyword>
<keyword id="KW-0325">Glycoprotein</keyword>
<keyword id="KW-0341">Growth regulation</keyword>
<keyword id="KW-0418">Kinase</keyword>
<keyword id="KW-0460">Magnesium</keyword>
<keyword id="KW-0464">Manganese</keyword>
<keyword id="KW-0472">Membrane</keyword>
<keyword id="KW-0479">Metal-binding</keyword>
<keyword id="KW-0547">Nucleotide-binding</keyword>
<keyword id="KW-0597">Phosphoprotein</keyword>
<keyword id="KW-0675">Receptor</keyword>
<keyword id="KW-1185">Reference proteome</keyword>
<keyword id="KW-0723">Serine/threonine-protein kinase</keyword>
<keyword id="KW-0732">Signal</keyword>
<keyword id="KW-0808">Transferase</keyword>
<keyword id="KW-0812">Transmembrane</keyword>
<keyword id="KW-1133">Transmembrane helix</keyword>